<feature type="signal peptide" evidence="3">
    <location>
        <begin position="1"/>
        <end position="22"/>
    </location>
</feature>
<feature type="chain" id="PRO_5012600737" description="Putative potassium channel toxin Ts22">
    <location>
        <begin position="23"/>
        <end position="59"/>
    </location>
</feature>
<feature type="site" description="Basic residue of the functional dyad" evidence="1">
    <location>
        <position position="49"/>
    </location>
</feature>
<feature type="site" description="Aromatic residue of the functional dyad" evidence="1">
    <location>
        <position position="58"/>
    </location>
</feature>
<feature type="disulfide bond" evidence="2">
    <location>
        <begin position="29"/>
        <end position="50"/>
    </location>
</feature>
<feature type="disulfide bond" evidence="2">
    <location>
        <begin position="35"/>
        <end position="55"/>
    </location>
</feature>
<feature type="disulfide bond" evidence="2">
    <location>
        <begin position="39"/>
        <end position="57"/>
    </location>
</feature>
<evidence type="ECO:0000250" key="1">
    <source>
        <dbReference type="UniProtKB" id="O46028"/>
    </source>
</evidence>
<evidence type="ECO:0000250" key="2">
    <source>
        <dbReference type="UniProtKB" id="P46114"/>
    </source>
</evidence>
<evidence type="ECO:0000255" key="3"/>
<evidence type="ECO:0000305" key="4"/>
<evidence type="ECO:0000305" key="5">
    <source>
    </source>
</evidence>
<evidence type="ECO:0000312" key="6">
    <source>
        <dbReference type="EMBL" id="JAW06990.1"/>
    </source>
</evidence>
<comment type="function">
    <text evidence="2">Potently blocks voltage-gated potassium channels (Kv).</text>
</comment>
<comment type="subcellular location">
    <subcellularLocation>
        <location evidence="5">Secreted</location>
    </subcellularLocation>
</comment>
<comment type="tissue specificity">
    <text evidence="5">Expressed by the venom gland.</text>
</comment>
<comment type="domain">
    <text evidence="2">Has the structural arrangement of an alpha-helix connected to a beta-sheet by disulfide bonds (CSalpha/beta).</text>
</comment>
<comment type="similarity">
    <text evidence="4">Belongs to the short scorpion toxin superfamily. Potassium channel inhibitor family. Alpha-KTx 04 subfamily.</text>
</comment>
<dbReference type="EMBL" id="GEUW01000055">
    <property type="protein sequence ID" value="JAW06990.1"/>
    <property type="molecule type" value="mRNA"/>
</dbReference>
<dbReference type="SMR" id="A0A218QX22"/>
<dbReference type="GO" id="GO:0005576">
    <property type="term" value="C:extracellular region"/>
    <property type="evidence" value="ECO:0007669"/>
    <property type="project" value="UniProtKB-SubCell"/>
</dbReference>
<dbReference type="GO" id="GO:0008200">
    <property type="term" value="F:ion channel inhibitor activity"/>
    <property type="evidence" value="ECO:0007669"/>
    <property type="project" value="InterPro"/>
</dbReference>
<dbReference type="GO" id="GO:0015459">
    <property type="term" value="F:potassium channel regulator activity"/>
    <property type="evidence" value="ECO:0007669"/>
    <property type="project" value="UniProtKB-KW"/>
</dbReference>
<dbReference type="GO" id="GO:0090729">
    <property type="term" value="F:toxin activity"/>
    <property type="evidence" value="ECO:0007669"/>
    <property type="project" value="UniProtKB-KW"/>
</dbReference>
<dbReference type="Gene3D" id="3.30.30.10">
    <property type="entry name" value="Knottin, scorpion toxin-like"/>
    <property type="match status" value="1"/>
</dbReference>
<dbReference type="InterPro" id="IPR036574">
    <property type="entry name" value="Scorpion_toxin-like_sf"/>
</dbReference>
<dbReference type="InterPro" id="IPR001947">
    <property type="entry name" value="Scorpion_toxinS_K_inh"/>
</dbReference>
<dbReference type="Pfam" id="PF00451">
    <property type="entry name" value="Toxin_2"/>
    <property type="match status" value="1"/>
</dbReference>
<dbReference type="SUPFAM" id="SSF57095">
    <property type="entry name" value="Scorpion toxin-like"/>
    <property type="match status" value="1"/>
</dbReference>
<dbReference type="PROSITE" id="PS01138">
    <property type="entry name" value="SCORP_SHORT_TOXIN"/>
    <property type="match status" value="1"/>
</dbReference>
<accession>A0A218QX22</accession>
<proteinExistence type="inferred from homology"/>
<name>KTX22_TITSE</name>
<reference evidence="6" key="1">
    <citation type="journal article" date="2018" name="PLoS ONE">
        <title>Proteomic endorsed transcriptomic profiles of venom glands from Tityus obscurus and T. serrulatus scorpions.</title>
        <authorList>
            <person name="de Oliveira U.C."/>
            <person name="Nishiyama M.Y. Jr."/>
            <person name="Dos Santos M.B.V."/>
            <person name="Santos-da-Silva A.P."/>
            <person name="Chalkidis H.M."/>
            <person name="Souza-Imberg A."/>
            <person name="Candido D.M."/>
            <person name="Yamanouye N."/>
            <person name="Dorce V.A.C."/>
            <person name="Junqueira-de-Azevedo I.L.M."/>
        </authorList>
    </citation>
    <scope>NUCLEOTIDE SEQUENCE [MRNA]</scope>
    <source>
        <tissue>Telson</tissue>
    </source>
</reference>
<keyword id="KW-1015">Disulfide bond</keyword>
<keyword id="KW-0872">Ion channel impairing toxin</keyword>
<keyword id="KW-0528">Neurotoxin</keyword>
<keyword id="KW-0632">Potassium channel impairing toxin</keyword>
<keyword id="KW-0964">Secreted</keyword>
<keyword id="KW-0732">Signal</keyword>
<keyword id="KW-0800">Toxin</keyword>
<keyword id="KW-1220">Voltage-gated potassium channel impairing toxin</keyword>
<sequence>MKAFYGILIIFILISMIDLSQQVFINATCTVSSQCRPKCIEAIGQAASKCINRKCKCYP</sequence>
<protein>
    <recommendedName>
        <fullName evidence="4">Putative potassium channel toxin Ts22</fullName>
    </recommendedName>
    <alternativeName>
        <fullName evidence="4">Putative KTx</fullName>
    </alternativeName>
    <alternativeName>
        <fullName evidence="4">Tityustoxin-22</fullName>
    </alternativeName>
</protein>
<organism>
    <name type="scientific">Tityus serrulatus</name>
    <name type="common">Brazilian scorpion</name>
    <dbReference type="NCBI Taxonomy" id="6887"/>
    <lineage>
        <taxon>Eukaryota</taxon>
        <taxon>Metazoa</taxon>
        <taxon>Ecdysozoa</taxon>
        <taxon>Arthropoda</taxon>
        <taxon>Chelicerata</taxon>
        <taxon>Arachnida</taxon>
        <taxon>Scorpiones</taxon>
        <taxon>Buthida</taxon>
        <taxon>Buthoidea</taxon>
        <taxon>Buthidae</taxon>
        <taxon>Tityus</taxon>
    </lineage>
</organism>